<reference key="1">
    <citation type="journal article" date="2007" name="Proc. Natl. Acad. Sci. U.S.A.">
        <title>Deep-sea vent epsilon-proteobacterial genomes provide insights into emergence of pathogens.</title>
        <authorList>
            <person name="Nakagawa S."/>
            <person name="Takaki Y."/>
            <person name="Shimamura S."/>
            <person name="Reysenbach A.-L."/>
            <person name="Takai K."/>
            <person name="Horikoshi K."/>
        </authorList>
    </citation>
    <scope>NUCLEOTIDE SEQUENCE [LARGE SCALE GENOMIC DNA]</scope>
    <source>
        <strain>NBC37-1</strain>
    </source>
</reference>
<evidence type="ECO:0000255" key="1">
    <source>
        <dbReference type="HAMAP-Rule" id="MF_01200"/>
    </source>
</evidence>
<gene>
    <name evidence="1" type="primary">pyrF</name>
    <name type="ordered locus">SUN_0676</name>
</gene>
<accession>A6Q826</accession>
<dbReference type="EC" id="4.1.1.23" evidence="1"/>
<dbReference type="EMBL" id="AP009179">
    <property type="protein sequence ID" value="BAF71635.1"/>
    <property type="molecule type" value="Genomic_DNA"/>
</dbReference>
<dbReference type="RefSeq" id="WP_011980368.1">
    <property type="nucleotide sequence ID" value="NC_009663.1"/>
</dbReference>
<dbReference type="SMR" id="A6Q826"/>
<dbReference type="STRING" id="387093.SUN_0676"/>
<dbReference type="KEGG" id="sun:SUN_0676"/>
<dbReference type="eggNOG" id="COG0284">
    <property type="taxonomic scope" value="Bacteria"/>
</dbReference>
<dbReference type="HOGENOM" id="CLU_067069_1_1_7"/>
<dbReference type="OrthoDB" id="9806203at2"/>
<dbReference type="UniPathway" id="UPA00070">
    <property type="reaction ID" value="UER00120"/>
</dbReference>
<dbReference type="Proteomes" id="UP000006378">
    <property type="component" value="Chromosome"/>
</dbReference>
<dbReference type="GO" id="GO:0005829">
    <property type="term" value="C:cytosol"/>
    <property type="evidence" value="ECO:0007669"/>
    <property type="project" value="TreeGrafter"/>
</dbReference>
<dbReference type="GO" id="GO:0004590">
    <property type="term" value="F:orotidine-5'-phosphate decarboxylase activity"/>
    <property type="evidence" value="ECO:0007669"/>
    <property type="project" value="UniProtKB-UniRule"/>
</dbReference>
<dbReference type="GO" id="GO:0006207">
    <property type="term" value="P:'de novo' pyrimidine nucleobase biosynthetic process"/>
    <property type="evidence" value="ECO:0007669"/>
    <property type="project" value="InterPro"/>
</dbReference>
<dbReference type="GO" id="GO:0044205">
    <property type="term" value="P:'de novo' UMP biosynthetic process"/>
    <property type="evidence" value="ECO:0007669"/>
    <property type="project" value="UniProtKB-UniRule"/>
</dbReference>
<dbReference type="CDD" id="cd04725">
    <property type="entry name" value="OMP_decarboxylase_like"/>
    <property type="match status" value="1"/>
</dbReference>
<dbReference type="Gene3D" id="3.20.20.70">
    <property type="entry name" value="Aldolase class I"/>
    <property type="match status" value="1"/>
</dbReference>
<dbReference type="HAMAP" id="MF_01200_B">
    <property type="entry name" value="OMPdecase_type1_B"/>
    <property type="match status" value="1"/>
</dbReference>
<dbReference type="InterPro" id="IPR013785">
    <property type="entry name" value="Aldolase_TIM"/>
</dbReference>
<dbReference type="InterPro" id="IPR014732">
    <property type="entry name" value="OMPdecase"/>
</dbReference>
<dbReference type="InterPro" id="IPR018089">
    <property type="entry name" value="OMPdecase_AS"/>
</dbReference>
<dbReference type="InterPro" id="IPR047596">
    <property type="entry name" value="OMPdecase_bac"/>
</dbReference>
<dbReference type="InterPro" id="IPR001754">
    <property type="entry name" value="OMPdeCOase_dom"/>
</dbReference>
<dbReference type="InterPro" id="IPR011060">
    <property type="entry name" value="RibuloseP-bd_barrel"/>
</dbReference>
<dbReference type="NCBIfam" id="NF001273">
    <property type="entry name" value="PRK00230.1"/>
    <property type="match status" value="1"/>
</dbReference>
<dbReference type="NCBIfam" id="TIGR01740">
    <property type="entry name" value="pyrF"/>
    <property type="match status" value="1"/>
</dbReference>
<dbReference type="PANTHER" id="PTHR32119">
    <property type="entry name" value="OROTIDINE 5'-PHOSPHATE DECARBOXYLASE"/>
    <property type="match status" value="1"/>
</dbReference>
<dbReference type="PANTHER" id="PTHR32119:SF2">
    <property type="entry name" value="OROTIDINE 5'-PHOSPHATE DECARBOXYLASE"/>
    <property type="match status" value="1"/>
</dbReference>
<dbReference type="Pfam" id="PF00215">
    <property type="entry name" value="OMPdecase"/>
    <property type="match status" value="1"/>
</dbReference>
<dbReference type="SMART" id="SM00934">
    <property type="entry name" value="OMPdecase"/>
    <property type="match status" value="1"/>
</dbReference>
<dbReference type="SUPFAM" id="SSF51366">
    <property type="entry name" value="Ribulose-phoshate binding barrel"/>
    <property type="match status" value="1"/>
</dbReference>
<dbReference type="PROSITE" id="PS00156">
    <property type="entry name" value="OMPDECASE"/>
    <property type="match status" value="1"/>
</dbReference>
<comment type="function">
    <text evidence="1">Catalyzes the decarboxylation of orotidine 5'-monophosphate (OMP) to uridine 5'-monophosphate (UMP).</text>
</comment>
<comment type="catalytic activity">
    <reaction evidence="1">
        <text>orotidine 5'-phosphate + H(+) = UMP + CO2</text>
        <dbReference type="Rhea" id="RHEA:11596"/>
        <dbReference type="ChEBI" id="CHEBI:15378"/>
        <dbReference type="ChEBI" id="CHEBI:16526"/>
        <dbReference type="ChEBI" id="CHEBI:57538"/>
        <dbReference type="ChEBI" id="CHEBI:57865"/>
        <dbReference type="EC" id="4.1.1.23"/>
    </reaction>
</comment>
<comment type="pathway">
    <text evidence="1">Pyrimidine metabolism; UMP biosynthesis via de novo pathway; UMP from orotate: step 2/2.</text>
</comment>
<comment type="subunit">
    <text evidence="1">Homodimer.</text>
</comment>
<comment type="similarity">
    <text evidence="1">Belongs to the OMP decarboxylase family. Type 1 subfamily.</text>
</comment>
<organism>
    <name type="scientific">Sulfurovum sp. (strain NBC37-1)</name>
    <dbReference type="NCBI Taxonomy" id="387093"/>
    <lineage>
        <taxon>Bacteria</taxon>
        <taxon>Pseudomonadati</taxon>
        <taxon>Campylobacterota</taxon>
        <taxon>Epsilonproteobacteria</taxon>
        <taxon>Campylobacterales</taxon>
        <taxon>Sulfurovaceae</taxon>
        <taxon>Sulfurovum</taxon>
    </lineage>
</organism>
<name>PYRF_SULNB</name>
<keyword id="KW-0210">Decarboxylase</keyword>
<keyword id="KW-0456">Lyase</keyword>
<keyword id="KW-0665">Pyrimidine biosynthesis</keyword>
<protein>
    <recommendedName>
        <fullName evidence="1">Orotidine 5'-phosphate decarboxylase</fullName>
        <ecNumber evidence="1">4.1.1.23</ecNumber>
    </recommendedName>
    <alternativeName>
        <fullName evidence="1">OMP decarboxylase</fullName>
        <shortName evidence="1">OMPDCase</shortName>
        <shortName evidence="1">OMPdecase</shortName>
    </alternativeName>
</protein>
<sequence length="230" mass="25692">MELCVALDLPSAKENLALAESLKAYNVWMKVGFRAYIRDGKPFIEALKAINPDFRIFLDLKLYDIPNTMADAAEEIAKLGVDMFNIHASAGAVAMKTVMERLSSYEKRPLVLAVTALTSFNEENFRMIYEKGIDEKAEQFARMSFENGLDGVVCSTFESRAIKNATSDDFLTLCPGIRPFGEDAGDQQRVATLELANEERVDFPVVGRPIYKDSDPKGKVEEILKLISTF</sequence>
<feature type="chain" id="PRO_1000065955" description="Orotidine 5'-phosphate decarboxylase">
    <location>
        <begin position="1"/>
        <end position="230"/>
    </location>
</feature>
<feature type="active site" description="Proton donor" evidence="1">
    <location>
        <position position="61"/>
    </location>
</feature>
<feature type="binding site" evidence="1">
    <location>
        <position position="8"/>
    </location>
    <ligand>
        <name>substrate</name>
    </ligand>
</feature>
<feature type="binding site" evidence="1">
    <location>
        <position position="30"/>
    </location>
    <ligand>
        <name>substrate</name>
    </ligand>
</feature>
<feature type="binding site" evidence="1">
    <location>
        <begin position="59"/>
        <end position="68"/>
    </location>
    <ligand>
        <name>substrate</name>
    </ligand>
</feature>
<feature type="binding site" evidence="1">
    <location>
        <position position="118"/>
    </location>
    <ligand>
        <name>substrate</name>
    </ligand>
</feature>
<feature type="binding site" evidence="1">
    <location>
        <position position="178"/>
    </location>
    <ligand>
        <name>substrate</name>
    </ligand>
</feature>
<feature type="binding site" evidence="1">
    <location>
        <position position="187"/>
    </location>
    <ligand>
        <name>substrate</name>
    </ligand>
</feature>
<feature type="binding site" evidence="1">
    <location>
        <position position="207"/>
    </location>
    <ligand>
        <name>substrate</name>
    </ligand>
</feature>
<feature type="binding site" evidence="1">
    <location>
        <position position="208"/>
    </location>
    <ligand>
        <name>substrate</name>
    </ligand>
</feature>
<proteinExistence type="inferred from homology"/>